<accession>Q04811</accession>
<feature type="chain" id="PRO_0000049634" description="Uncharacterized protein YmxH">
    <location>
        <begin position="1"/>
        <end position="85"/>
    </location>
</feature>
<name>YMXH_BACSU</name>
<organism>
    <name type="scientific">Bacillus subtilis (strain 168)</name>
    <dbReference type="NCBI Taxonomy" id="224308"/>
    <lineage>
        <taxon>Bacteria</taxon>
        <taxon>Bacillati</taxon>
        <taxon>Bacillota</taxon>
        <taxon>Bacilli</taxon>
        <taxon>Bacillales</taxon>
        <taxon>Bacillaceae</taxon>
        <taxon>Bacillus</taxon>
    </lineage>
</organism>
<keyword id="KW-1185">Reference proteome</keyword>
<keyword id="KW-0749">Sporulation</keyword>
<sequence length="85" mass="9764">MRLSELSGKEIVDIKRAERLGVLGQTDLEINEQDGQITALLIPTVKWFGLRKQGHDIRVPWHHIQKIGSDMIILDVPEEMPPRQE</sequence>
<comment type="similarity">
    <text evidence="1">Belongs to the YlmC/YmxH family.</text>
</comment>
<protein>
    <recommendedName>
        <fullName>Uncharacterized protein YmxH</fullName>
    </recommendedName>
    <alternativeName>
        <fullName>ORFZ</fullName>
    </alternativeName>
</protein>
<dbReference type="EMBL" id="L08471">
    <property type="protein sequence ID" value="AAA22380.1"/>
    <property type="molecule type" value="Genomic_DNA"/>
</dbReference>
<dbReference type="EMBL" id="AL009126">
    <property type="protein sequence ID" value="CAB13545.1"/>
    <property type="molecule type" value="Genomic_DNA"/>
</dbReference>
<dbReference type="PIR" id="A46665">
    <property type="entry name" value="A46665"/>
</dbReference>
<dbReference type="RefSeq" id="NP_389554.1">
    <property type="nucleotide sequence ID" value="NC_000964.3"/>
</dbReference>
<dbReference type="RefSeq" id="WP_003231890.1">
    <property type="nucleotide sequence ID" value="NZ_OZ025638.1"/>
</dbReference>
<dbReference type="SMR" id="Q04811"/>
<dbReference type="FunCoup" id="Q04811">
    <property type="interactions" value="75"/>
</dbReference>
<dbReference type="STRING" id="224308.BSU16720"/>
<dbReference type="PaxDb" id="224308-BSU16720"/>
<dbReference type="EnsemblBacteria" id="CAB13545">
    <property type="protein sequence ID" value="CAB13545"/>
    <property type="gene ID" value="BSU_16720"/>
</dbReference>
<dbReference type="GeneID" id="939648"/>
<dbReference type="KEGG" id="bsu:BSU16720"/>
<dbReference type="PATRIC" id="fig|224308.179.peg.1813"/>
<dbReference type="eggNOG" id="COG1873">
    <property type="taxonomic scope" value="Bacteria"/>
</dbReference>
<dbReference type="InParanoid" id="Q04811"/>
<dbReference type="OrthoDB" id="2468688at2"/>
<dbReference type="PhylomeDB" id="Q04811"/>
<dbReference type="BioCyc" id="BSUB:BSU16720-MONOMER"/>
<dbReference type="Proteomes" id="UP000001570">
    <property type="component" value="Chromosome"/>
</dbReference>
<dbReference type="GO" id="GO:0030435">
    <property type="term" value="P:sporulation resulting in formation of a cellular spore"/>
    <property type="evidence" value="ECO:0007669"/>
    <property type="project" value="UniProtKB-KW"/>
</dbReference>
<dbReference type="Gene3D" id="2.30.30.240">
    <property type="entry name" value="PRC-barrel domain"/>
    <property type="match status" value="1"/>
</dbReference>
<dbReference type="InterPro" id="IPR027275">
    <property type="entry name" value="PRC-brl_dom"/>
</dbReference>
<dbReference type="InterPro" id="IPR011033">
    <property type="entry name" value="PRC_barrel-like_sf"/>
</dbReference>
<dbReference type="InterPro" id="IPR014238">
    <property type="entry name" value="Spore_YlmC/YmxH"/>
</dbReference>
<dbReference type="NCBIfam" id="TIGR02888">
    <property type="entry name" value="spore_YlmC_YmxH"/>
    <property type="match status" value="1"/>
</dbReference>
<dbReference type="PANTHER" id="PTHR40061:SF2">
    <property type="entry name" value="PRC-BARREL DOMAIN-CONTAINING PROTEIN"/>
    <property type="match status" value="1"/>
</dbReference>
<dbReference type="PANTHER" id="PTHR40061">
    <property type="entry name" value="SPORULATION PROTEIN YLMC-RELATED"/>
    <property type="match status" value="1"/>
</dbReference>
<dbReference type="Pfam" id="PF05239">
    <property type="entry name" value="PRC"/>
    <property type="match status" value="1"/>
</dbReference>
<dbReference type="SUPFAM" id="SSF50346">
    <property type="entry name" value="PRC-barrel domain"/>
    <property type="match status" value="1"/>
</dbReference>
<gene>
    <name type="primary">ymxH</name>
    <name type="ordered locus">BSU16720</name>
</gene>
<proteinExistence type="inferred from homology"/>
<evidence type="ECO:0000305" key="1"/>
<reference key="1">
    <citation type="journal article" date="1993" name="J. Biol. Chem.">
        <title>Organization and nucleotide sequence of the Bacillus subtilis diaminopimelate operon, a cluster of genes encoding the first three enzymes of diaminopimelate synthesis and dipicolinate synthase.</title>
        <authorList>
            <person name="Chen N.-Y."/>
            <person name="Jiang S.-Q."/>
            <person name="Klein D.A."/>
            <person name="Paulus H."/>
        </authorList>
    </citation>
    <scope>NUCLEOTIDE SEQUENCE [GENOMIC DNA]</scope>
    <source>
        <strain>168</strain>
    </source>
</reference>
<reference key="2">
    <citation type="journal article" date="1997" name="Nature">
        <title>The complete genome sequence of the Gram-positive bacterium Bacillus subtilis.</title>
        <authorList>
            <person name="Kunst F."/>
            <person name="Ogasawara N."/>
            <person name="Moszer I."/>
            <person name="Albertini A.M."/>
            <person name="Alloni G."/>
            <person name="Azevedo V."/>
            <person name="Bertero M.G."/>
            <person name="Bessieres P."/>
            <person name="Bolotin A."/>
            <person name="Borchert S."/>
            <person name="Borriss R."/>
            <person name="Boursier L."/>
            <person name="Brans A."/>
            <person name="Braun M."/>
            <person name="Brignell S.C."/>
            <person name="Bron S."/>
            <person name="Brouillet S."/>
            <person name="Bruschi C.V."/>
            <person name="Caldwell B."/>
            <person name="Capuano V."/>
            <person name="Carter N.M."/>
            <person name="Choi S.-K."/>
            <person name="Codani J.-J."/>
            <person name="Connerton I.F."/>
            <person name="Cummings N.J."/>
            <person name="Daniel R.A."/>
            <person name="Denizot F."/>
            <person name="Devine K.M."/>
            <person name="Duesterhoeft A."/>
            <person name="Ehrlich S.D."/>
            <person name="Emmerson P.T."/>
            <person name="Entian K.-D."/>
            <person name="Errington J."/>
            <person name="Fabret C."/>
            <person name="Ferrari E."/>
            <person name="Foulger D."/>
            <person name="Fritz C."/>
            <person name="Fujita M."/>
            <person name="Fujita Y."/>
            <person name="Fuma S."/>
            <person name="Galizzi A."/>
            <person name="Galleron N."/>
            <person name="Ghim S.-Y."/>
            <person name="Glaser P."/>
            <person name="Goffeau A."/>
            <person name="Golightly E.J."/>
            <person name="Grandi G."/>
            <person name="Guiseppi G."/>
            <person name="Guy B.J."/>
            <person name="Haga K."/>
            <person name="Haiech J."/>
            <person name="Harwood C.R."/>
            <person name="Henaut A."/>
            <person name="Hilbert H."/>
            <person name="Holsappel S."/>
            <person name="Hosono S."/>
            <person name="Hullo M.-F."/>
            <person name="Itaya M."/>
            <person name="Jones L.-M."/>
            <person name="Joris B."/>
            <person name="Karamata D."/>
            <person name="Kasahara Y."/>
            <person name="Klaerr-Blanchard M."/>
            <person name="Klein C."/>
            <person name="Kobayashi Y."/>
            <person name="Koetter P."/>
            <person name="Koningstein G."/>
            <person name="Krogh S."/>
            <person name="Kumano M."/>
            <person name="Kurita K."/>
            <person name="Lapidus A."/>
            <person name="Lardinois S."/>
            <person name="Lauber J."/>
            <person name="Lazarevic V."/>
            <person name="Lee S.-M."/>
            <person name="Levine A."/>
            <person name="Liu H."/>
            <person name="Masuda S."/>
            <person name="Mauel C."/>
            <person name="Medigue C."/>
            <person name="Medina N."/>
            <person name="Mellado R.P."/>
            <person name="Mizuno M."/>
            <person name="Moestl D."/>
            <person name="Nakai S."/>
            <person name="Noback M."/>
            <person name="Noone D."/>
            <person name="O'Reilly M."/>
            <person name="Ogawa K."/>
            <person name="Ogiwara A."/>
            <person name="Oudega B."/>
            <person name="Park S.-H."/>
            <person name="Parro V."/>
            <person name="Pohl T.M."/>
            <person name="Portetelle D."/>
            <person name="Porwollik S."/>
            <person name="Prescott A.M."/>
            <person name="Presecan E."/>
            <person name="Pujic P."/>
            <person name="Purnelle B."/>
            <person name="Rapoport G."/>
            <person name="Rey M."/>
            <person name="Reynolds S."/>
            <person name="Rieger M."/>
            <person name="Rivolta C."/>
            <person name="Rocha E."/>
            <person name="Roche B."/>
            <person name="Rose M."/>
            <person name="Sadaie Y."/>
            <person name="Sato T."/>
            <person name="Scanlan E."/>
            <person name="Schleich S."/>
            <person name="Schroeter R."/>
            <person name="Scoffone F."/>
            <person name="Sekiguchi J."/>
            <person name="Sekowska A."/>
            <person name="Seror S.J."/>
            <person name="Serror P."/>
            <person name="Shin B.-S."/>
            <person name="Soldo B."/>
            <person name="Sorokin A."/>
            <person name="Tacconi E."/>
            <person name="Takagi T."/>
            <person name="Takahashi H."/>
            <person name="Takemaru K."/>
            <person name="Takeuchi M."/>
            <person name="Tamakoshi A."/>
            <person name="Tanaka T."/>
            <person name="Terpstra P."/>
            <person name="Tognoni A."/>
            <person name="Tosato V."/>
            <person name="Uchiyama S."/>
            <person name="Vandenbol M."/>
            <person name="Vannier F."/>
            <person name="Vassarotti A."/>
            <person name="Viari A."/>
            <person name="Wambutt R."/>
            <person name="Wedler E."/>
            <person name="Wedler H."/>
            <person name="Weitzenegger T."/>
            <person name="Winters P."/>
            <person name="Wipat A."/>
            <person name="Yamamoto H."/>
            <person name="Yamane K."/>
            <person name="Yasumoto K."/>
            <person name="Yata K."/>
            <person name="Yoshida K."/>
            <person name="Yoshikawa H.-F."/>
            <person name="Zumstein E."/>
            <person name="Yoshikawa H."/>
            <person name="Danchin A."/>
        </authorList>
    </citation>
    <scope>NUCLEOTIDE SEQUENCE [LARGE SCALE GENOMIC DNA]</scope>
    <source>
        <strain>168</strain>
    </source>
</reference>